<protein>
    <recommendedName>
        <fullName evidence="1">Small ribosomal subunit protein uS15</fullName>
    </recommendedName>
    <alternativeName>
        <fullName evidence="2">30S ribosomal protein S15</fullName>
    </alternativeName>
</protein>
<reference key="1">
    <citation type="journal article" date="2004" name="J. Bacteriol.">
        <title>The genome sequence of Mycoplasma hyopneumoniae strain 232, the agent of swine mycoplasmosis.</title>
        <authorList>
            <person name="Minion F.C."/>
            <person name="Lefkowitz E.J."/>
            <person name="Madsen M.L."/>
            <person name="Cleary B.J."/>
            <person name="Swartzell S.M."/>
            <person name="Mahairas G.G."/>
        </authorList>
    </citation>
    <scope>NUCLEOTIDE SEQUENCE [LARGE SCALE GENOMIC DNA]</scope>
    <source>
        <strain>232</strain>
    </source>
</reference>
<feature type="chain" id="PRO_0000115477" description="Small ribosomal subunit protein uS15">
    <location>
        <begin position="1"/>
        <end position="88"/>
    </location>
</feature>
<dbReference type="EMBL" id="AE017332">
    <property type="protein sequence ID" value="AAV27801.1"/>
    <property type="molecule type" value="Genomic_DNA"/>
</dbReference>
<dbReference type="RefSeq" id="WP_011206113.1">
    <property type="nucleotide sequence ID" value="NC_006360.1"/>
</dbReference>
<dbReference type="SMR" id="P0C0K0"/>
<dbReference type="GeneID" id="41334401"/>
<dbReference type="KEGG" id="mhy:mhp276"/>
<dbReference type="eggNOG" id="COG0184">
    <property type="taxonomic scope" value="Bacteria"/>
</dbReference>
<dbReference type="HOGENOM" id="CLU_148518_0_0_14"/>
<dbReference type="PhylomeDB" id="P0C0K0"/>
<dbReference type="Proteomes" id="UP000006822">
    <property type="component" value="Chromosome"/>
</dbReference>
<dbReference type="GO" id="GO:0005737">
    <property type="term" value="C:cytoplasm"/>
    <property type="evidence" value="ECO:0007669"/>
    <property type="project" value="UniProtKB-ARBA"/>
</dbReference>
<dbReference type="GO" id="GO:1990904">
    <property type="term" value="C:ribonucleoprotein complex"/>
    <property type="evidence" value="ECO:0007669"/>
    <property type="project" value="UniProtKB-KW"/>
</dbReference>
<dbReference type="GO" id="GO:0005840">
    <property type="term" value="C:ribosome"/>
    <property type="evidence" value="ECO:0007669"/>
    <property type="project" value="UniProtKB-KW"/>
</dbReference>
<dbReference type="GO" id="GO:0019843">
    <property type="term" value="F:rRNA binding"/>
    <property type="evidence" value="ECO:0007669"/>
    <property type="project" value="UniProtKB-UniRule"/>
</dbReference>
<dbReference type="GO" id="GO:0003735">
    <property type="term" value="F:structural constituent of ribosome"/>
    <property type="evidence" value="ECO:0007669"/>
    <property type="project" value="InterPro"/>
</dbReference>
<dbReference type="GO" id="GO:0006412">
    <property type="term" value="P:translation"/>
    <property type="evidence" value="ECO:0007669"/>
    <property type="project" value="UniProtKB-UniRule"/>
</dbReference>
<dbReference type="CDD" id="cd00353">
    <property type="entry name" value="Ribosomal_S15p_S13e"/>
    <property type="match status" value="1"/>
</dbReference>
<dbReference type="Gene3D" id="6.10.250.3130">
    <property type="match status" value="1"/>
</dbReference>
<dbReference type="Gene3D" id="1.10.287.10">
    <property type="entry name" value="S15/NS1, RNA-binding"/>
    <property type="match status" value="1"/>
</dbReference>
<dbReference type="HAMAP" id="MF_01343_B">
    <property type="entry name" value="Ribosomal_uS15_B"/>
    <property type="match status" value="1"/>
</dbReference>
<dbReference type="InterPro" id="IPR000589">
    <property type="entry name" value="Ribosomal_uS15"/>
</dbReference>
<dbReference type="InterPro" id="IPR005290">
    <property type="entry name" value="Ribosomal_uS15_bac-type"/>
</dbReference>
<dbReference type="InterPro" id="IPR009068">
    <property type="entry name" value="uS15_NS1_RNA-bd_sf"/>
</dbReference>
<dbReference type="NCBIfam" id="TIGR00952">
    <property type="entry name" value="S15_bact"/>
    <property type="match status" value="1"/>
</dbReference>
<dbReference type="PANTHER" id="PTHR23321">
    <property type="entry name" value="RIBOSOMAL PROTEIN S15, BACTERIAL AND ORGANELLAR"/>
    <property type="match status" value="1"/>
</dbReference>
<dbReference type="PANTHER" id="PTHR23321:SF26">
    <property type="entry name" value="SMALL RIBOSOMAL SUBUNIT PROTEIN US15M"/>
    <property type="match status" value="1"/>
</dbReference>
<dbReference type="Pfam" id="PF00312">
    <property type="entry name" value="Ribosomal_S15"/>
    <property type="match status" value="1"/>
</dbReference>
<dbReference type="SMART" id="SM01387">
    <property type="entry name" value="Ribosomal_S15"/>
    <property type="match status" value="1"/>
</dbReference>
<dbReference type="SUPFAM" id="SSF47060">
    <property type="entry name" value="S15/NS1 RNA-binding domain"/>
    <property type="match status" value="1"/>
</dbReference>
<dbReference type="PROSITE" id="PS00362">
    <property type="entry name" value="RIBOSOMAL_S15"/>
    <property type="match status" value="1"/>
</dbReference>
<name>RS15_MESH2</name>
<gene>
    <name evidence="1" type="primary">rpsO</name>
    <name evidence="1" type="synonym">rps15</name>
    <name type="ordered locus">mhp276</name>
</gene>
<organism>
    <name type="scientific">Mesomycoplasma hyopneumoniae (strain 232)</name>
    <name type="common">Mycoplasma hyopneumoniae</name>
    <dbReference type="NCBI Taxonomy" id="295358"/>
    <lineage>
        <taxon>Bacteria</taxon>
        <taxon>Bacillati</taxon>
        <taxon>Mycoplasmatota</taxon>
        <taxon>Mycoplasmoidales</taxon>
        <taxon>Metamycoplasmataceae</taxon>
        <taxon>Mesomycoplasma</taxon>
    </lineage>
</organism>
<sequence>MISKARKQEIILKFGKNPKNTGNTSVQIALLTEDIERLKLHFLKNKKDKHSMRGFIAKVNKRKKLLNYLRINSFDTYKETIEALNIRK</sequence>
<comment type="function">
    <text evidence="1">One of the primary rRNA binding proteins, it binds directly to 16S rRNA where it helps nucleate assembly of the platform of the 30S subunit by binding and bridging several RNA helices of the 16S rRNA.</text>
</comment>
<comment type="function">
    <text evidence="1">Forms an intersubunit bridge (bridge B4) with the 23S rRNA of the 50S subunit in the ribosome.</text>
</comment>
<comment type="subunit">
    <text evidence="1">Part of the 30S ribosomal subunit. Forms a bridge to the 50S subunit in the 70S ribosome, contacting the 23S rRNA.</text>
</comment>
<comment type="similarity">
    <text evidence="1">Belongs to the universal ribosomal protein uS15 family.</text>
</comment>
<keyword id="KW-0687">Ribonucleoprotein</keyword>
<keyword id="KW-0689">Ribosomal protein</keyword>
<keyword id="KW-0694">RNA-binding</keyword>
<keyword id="KW-0699">rRNA-binding</keyword>
<proteinExistence type="inferred from homology"/>
<evidence type="ECO:0000255" key="1">
    <source>
        <dbReference type="HAMAP-Rule" id="MF_01343"/>
    </source>
</evidence>
<evidence type="ECO:0000305" key="2"/>
<accession>P0C0K0</accession>
<accession>P46189</accession>
<accession>Q601C6</accession>